<sequence length="239" mass="27201">MAHITRFETPWFLVISKKQYKWTVRPNAGPHPIEKSIPLAVVIRDYLKLAETVREAKHIIFDGKVLVDGKVRKDYKYPVGLMDIVSIPSADLYFRVIPDNVRFMRLSKISADEAHYKYVRIMNKTTVKGGSIQLNLEDGRNILVDKETAKSFKTLMTLKIELPSQNIVDSFIISEGSYAIFVGGKNVGIHGVVKNINLSKFKSRKYSVITLESKDGNTYQTNLMNVMSIGREKSDMRVD</sequence>
<name>RS4E_SACI1</name>
<accession>C3NH97</accession>
<proteinExistence type="inferred from homology"/>
<keyword id="KW-0687">Ribonucleoprotein</keyword>
<keyword id="KW-0689">Ribosomal protein</keyword>
<keyword id="KW-0694">RNA-binding</keyword>
<keyword id="KW-0699">rRNA-binding</keyword>
<organism>
    <name type="scientific">Saccharolobus islandicus (strain Y.N.15.51 / Yellowstone #2)</name>
    <name type="common">Sulfolobus islandicus</name>
    <dbReference type="NCBI Taxonomy" id="419942"/>
    <lineage>
        <taxon>Archaea</taxon>
        <taxon>Thermoproteota</taxon>
        <taxon>Thermoprotei</taxon>
        <taxon>Sulfolobales</taxon>
        <taxon>Sulfolobaceae</taxon>
        <taxon>Saccharolobus</taxon>
    </lineage>
</organism>
<evidence type="ECO:0000255" key="1">
    <source>
        <dbReference type="HAMAP-Rule" id="MF_00485"/>
    </source>
</evidence>
<evidence type="ECO:0000305" key="2"/>
<dbReference type="EMBL" id="CP001404">
    <property type="protein sequence ID" value="ACP48507.1"/>
    <property type="molecule type" value="Genomic_DNA"/>
</dbReference>
<dbReference type="RefSeq" id="WP_012711430.1">
    <property type="nucleotide sequence ID" value="NC_012623.1"/>
</dbReference>
<dbReference type="SMR" id="C3NH97"/>
<dbReference type="KEGG" id="sin:YN1551_1416"/>
<dbReference type="HOGENOM" id="CLU_060400_0_0_2"/>
<dbReference type="Proteomes" id="UP000006818">
    <property type="component" value="Chromosome"/>
</dbReference>
<dbReference type="GO" id="GO:0022627">
    <property type="term" value="C:cytosolic small ribosomal subunit"/>
    <property type="evidence" value="ECO:0007669"/>
    <property type="project" value="TreeGrafter"/>
</dbReference>
<dbReference type="GO" id="GO:0019843">
    <property type="term" value="F:rRNA binding"/>
    <property type="evidence" value="ECO:0007669"/>
    <property type="project" value="UniProtKB-KW"/>
</dbReference>
<dbReference type="GO" id="GO:0003735">
    <property type="term" value="F:structural constituent of ribosome"/>
    <property type="evidence" value="ECO:0007669"/>
    <property type="project" value="InterPro"/>
</dbReference>
<dbReference type="GO" id="GO:0006412">
    <property type="term" value="P:translation"/>
    <property type="evidence" value="ECO:0007669"/>
    <property type="project" value="UniProtKB-UniRule"/>
</dbReference>
<dbReference type="CDD" id="cd06087">
    <property type="entry name" value="KOW_RPS4"/>
    <property type="match status" value="1"/>
</dbReference>
<dbReference type="CDD" id="cd00165">
    <property type="entry name" value="S4"/>
    <property type="match status" value="1"/>
</dbReference>
<dbReference type="FunFam" id="2.30.30.30:FF:000069">
    <property type="entry name" value="30S ribosomal protein S4e"/>
    <property type="match status" value="1"/>
</dbReference>
<dbReference type="FunFam" id="3.10.290.10:FF:000002">
    <property type="entry name" value="40S ribosomal protein S4"/>
    <property type="match status" value="1"/>
</dbReference>
<dbReference type="Gene3D" id="2.30.30.30">
    <property type="match status" value="1"/>
</dbReference>
<dbReference type="Gene3D" id="2.40.50.740">
    <property type="match status" value="1"/>
</dbReference>
<dbReference type="Gene3D" id="3.10.290.10">
    <property type="entry name" value="RNA-binding S4 domain"/>
    <property type="match status" value="1"/>
</dbReference>
<dbReference type="HAMAP" id="MF_00485">
    <property type="entry name" value="Ribosomal_eS4"/>
    <property type="match status" value="1"/>
</dbReference>
<dbReference type="InterPro" id="IPR014722">
    <property type="entry name" value="Rib_uL2_dom2"/>
</dbReference>
<dbReference type="InterPro" id="IPR000876">
    <property type="entry name" value="Ribosomal_eS4"/>
</dbReference>
<dbReference type="InterPro" id="IPR013845">
    <property type="entry name" value="Ribosomal_eS4_central_region"/>
</dbReference>
<dbReference type="InterPro" id="IPR038237">
    <property type="entry name" value="Ribosomal_eS4_central_sf"/>
</dbReference>
<dbReference type="InterPro" id="IPR041982">
    <property type="entry name" value="Ribosomal_eS4_KOW"/>
</dbReference>
<dbReference type="InterPro" id="IPR002942">
    <property type="entry name" value="S4_RNA-bd"/>
</dbReference>
<dbReference type="InterPro" id="IPR036986">
    <property type="entry name" value="S4_RNA-bd_sf"/>
</dbReference>
<dbReference type="NCBIfam" id="NF003312">
    <property type="entry name" value="PRK04313.1"/>
    <property type="match status" value="1"/>
</dbReference>
<dbReference type="PANTHER" id="PTHR11581">
    <property type="entry name" value="30S/40S RIBOSOMAL PROTEIN S4"/>
    <property type="match status" value="1"/>
</dbReference>
<dbReference type="PANTHER" id="PTHR11581:SF0">
    <property type="entry name" value="SMALL RIBOSOMAL SUBUNIT PROTEIN ES4"/>
    <property type="match status" value="1"/>
</dbReference>
<dbReference type="Pfam" id="PF00900">
    <property type="entry name" value="Ribosomal_S4e"/>
    <property type="match status" value="1"/>
</dbReference>
<dbReference type="Pfam" id="PF01479">
    <property type="entry name" value="S4"/>
    <property type="match status" value="1"/>
</dbReference>
<dbReference type="PIRSF" id="PIRSF002116">
    <property type="entry name" value="Ribosomal_S4"/>
    <property type="match status" value="1"/>
</dbReference>
<dbReference type="SMART" id="SM00363">
    <property type="entry name" value="S4"/>
    <property type="match status" value="1"/>
</dbReference>
<dbReference type="SUPFAM" id="SSF55174">
    <property type="entry name" value="Alpha-L RNA-binding motif"/>
    <property type="match status" value="1"/>
</dbReference>
<dbReference type="PROSITE" id="PS50889">
    <property type="entry name" value="S4"/>
    <property type="match status" value="1"/>
</dbReference>
<feature type="chain" id="PRO_1000206441" description="Small ribosomal subunit protein eS4">
    <location>
        <begin position="1"/>
        <end position="239"/>
    </location>
</feature>
<feature type="domain" description="S4 RNA-binding" evidence="1">
    <location>
        <begin position="37"/>
        <end position="99"/>
    </location>
</feature>
<protein>
    <recommendedName>
        <fullName evidence="1">Small ribosomal subunit protein eS4</fullName>
    </recommendedName>
    <alternativeName>
        <fullName evidence="2">30S ribosomal protein S4e</fullName>
    </alternativeName>
</protein>
<gene>
    <name evidence="1" type="primary">rps4e</name>
    <name type="ordered locus">YN1551_1416</name>
</gene>
<comment type="similarity">
    <text evidence="1">Belongs to the eukaryotic ribosomal protein eS4 family.</text>
</comment>
<reference key="1">
    <citation type="journal article" date="2009" name="Proc. Natl. Acad. Sci. U.S.A.">
        <title>Biogeography of the Sulfolobus islandicus pan-genome.</title>
        <authorList>
            <person name="Reno M.L."/>
            <person name="Held N.L."/>
            <person name="Fields C.J."/>
            <person name="Burke P.V."/>
            <person name="Whitaker R.J."/>
        </authorList>
    </citation>
    <scope>NUCLEOTIDE SEQUENCE [LARGE SCALE GENOMIC DNA]</scope>
    <source>
        <strain>Y.N.15.51 / Yellowstone #2</strain>
    </source>
</reference>